<protein>
    <recommendedName>
        <fullName evidence="1">Large ribosomal subunit protein bL17</fullName>
    </recommendedName>
    <alternativeName>
        <fullName evidence="2">50S ribosomal protein L17</fullName>
    </alternativeName>
</protein>
<evidence type="ECO:0000255" key="1">
    <source>
        <dbReference type="HAMAP-Rule" id="MF_01368"/>
    </source>
</evidence>
<evidence type="ECO:0000305" key="2"/>
<name>RL17_GLAP5</name>
<gene>
    <name evidence="1" type="primary">rplQ</name>
    <name type="ordered locus">HAPS_1428</name>
</gene>
<dbReference type="EMBL" id="CP001321">
    <property type="protein sequence ID" value="ACL32997.1"/>
    <property type="molecule type" value="Genomic_DNA"/>
</dbReference>
<dbReference type="RefSeq" id="WP_005711970.1">
    <property type="nucleotide sequence ID" value="NC_011852.1"/>
</dbReference>
<dbReference type="SMR" id="B8F6P5"/>
<dbReference type="STRING" id="557723.HAPS_1428"/>
<dbReference type="GeneID" id="66617793"/>
<dbReference type="KEGG" id="hap:HAPS_1428"/>
<dbReference type="HOGENOM" id="CLU_074407_2_0_6"/>
<dbReference type="Proteomes" id="UP000006743">
    <property type="component" value="Chromosome"/>
</dbReference>
<dbReference type="GO" id="GO:0022625">
    <property type="term" value="C:cytosolic large ribosomal subunit"/>
    <property type="evidence" value="ECO:0007669"/>
    <property type="project" value="TreeGrafter"/>
</dbReference>
<dbReference type="GO" id="GO:0003735">
    <property type="term" value="F:structural constituent of ribosome"/>
    <property type="evidence" value="ECO:0007669"/>
    <property type="project" value="InterPro"/>
</dbReference>
<dbReference type="GO" id="GO:0006412">
    <property type="term" value="P:translation"/>
    <property type="evidence" value="ECO:0007669"/>
    <property type="project" value="UniProtKB-UniRule"/>
</dbReference>
<dbReference type="FunFam" id="3.90.1030.10:FF:000001">
    <property type="entry name" value="50S ribosomal protein L17"/>
    <property type="match status" value="1"/>
</dbReference>
<dbReference type="Gene3D" id="3.90.1030.10">
    <property type="entry name" value="Ribosomal protein L17"/>
    <property type="match status" value="1"/>
</dbReference>
<dbReference type="HAMAP" id="MF_01368">
    <property type="entry name" value="Ribosomal_bL17"/>
    <property type="match status" value="1"/>
</dbReference>
<dbReference type="InterPro" id="IPR000456">
    <property type="entry name" value="Ribosomal_bL17"/>
</dbReference>
<dbReference type="InterPro" id="IPR047859">
    <property type="entry name" value="Ribosomal_bL17_CS"/>
</dbReference>
<dbReference type="InterPro" id="IPR036373">
    <property type="entry name" value="Ribosomal_bL17_sf"/>
</dbReference>
<dbReference type="NCBIfam" id="TIGR00059">
    <property type="entry name" value="L17"/>
    <property type="match status" value="1"/>
</dbReference>
<dbReference type="PANTHER" id="PTHR14413:SF16">
    <property type="entry name" value="LARGE RIBOSOMAL SUBUNIT PROTEIN BL17M"/>
    <property type="match status" value="1"/>
</dbReference>
<dbReference type="PANTHER" id="PTHR14413">
    <property type="entry name" value="RIBOSOMAL PROTEIN L17"/>
    <property type="match status" value="1"/>
</dbReference>
<dbReference type="Pfam" id="PF01196">
    <property type="entry name" value="Ribosomal_L17"/>
    <property type="match status" value="1"/>
</dbReference>
<dbReference type="SUPFAM" id="SSF64263">
    <property type="entry name" value="Prokaryotic ribosomal protein L17"/>
    <property type="match status" value="1"/>
</dbReference>
<dbReference type="PROSITE" id="PS01167">
    <property type="entry name" value="RIBOSOMAL_L17"/>
    <property type="match status" value="1"/>
</dbReference>
<accession>B8F6P5</accession>
<sequence length="128" mass="14394">MRHRKSGRQLNRNSSHRQALFRNLASALVSHEIIKTTLPKAKELRRVVEPLITLAKVDSVANRRLAFARTRNIETVAKLFNELGPRFANRAGGYTRILKCGFRAGDNAPMAYIELVDRPEVAAEQAAE</sequence>
<feature type="chain" id="PRO_1000184025" description="Large ribosomal subunit protein bL17">
    <location>
        <begin position="1"/>
        <end position="128"/>
    </location>
</feature>
<organism>
    <name type="scientific">Glaesserella parasuis serovar 5 (strain SH0165)</name>
    <name type="common">Haemophilus parasuis</name>
    <dbReference type="NCBI Taxonomy" id="557723"/>
    <lineage>
        <taxon>Bacteria</taxon>
        <taxon>Pseudomonadati</taxon>
        <taxon>Pseudomonadota</taxon>
        <taxon>Gammaproteobacteria</taxon>
        <taxon>Pasteurellales</taxon>
        <taxon>Pasteurellaceae</taxon>
        <taxon>Glaesserella</taxon>
    </lineage>
</organism>
<reference key="1">
    <citation type="journal article" date="2009" name="J. Bacteriol.">
        <title>Complete genome sequence of Haemophilus parasuis SH0165.</title>
        <authorList>
            <person name="Yue M."/>
            <person name="Yang F."/>
            <person name="Yang J."/>
            <person name="Bei W."/>
            <person name="Cai X."/>
            <person name="Chen L."/>
            <person name="Dong J."/>
            <person name="Zhou R."/>
            <person name="Jin M."/>
            <person name="Jin Q."/>
            <person name="Chen H."/>
        </authorList>
    </citation>
    <scope>NUCLEOTIDE SEQUENCE [LARGE SCALE GENOMIC DNA]</scope>
    <source>
        <strain>SH0165</strain>
    </source>
</reference>
<proteinExistence type="inferred from homology"/>
<keyword id="KW-1185">Reference proteome</keyword>
<keyword id="KW-0687">Ribonucleoprotein</keyword>
<keyword id="KW-0689">Ribosomal protein</keyword>
<comment type="subunit">
    <text evidence="1">Part of the 50S ribosomal subunit. Contacts protein L32.</text>
</comment>
<comment type="similarity">
    <text evidence="1">Belongs to the bacterial ribosomal protein bL17 family.</text>
</comment>